<feature type="chain" id="PRO_1000138503" description="Orotidine 5'-phosphate decarboxylase">
    <location>
        <begin position="1"/>
        <end position="232"/>
    </location>
</feature>
<feature type="active site" description="Proton donor" evidence="1">
    <location>
        <position position="64"/>
    </location>
</feature>
<feature type="binding site" evidence="1">
    <location>
        <position position="13"/>
    </location>
    <ligand>
        <name>substrate</name>
    </ligand>
</feature>
<feature type="binding site" evidence="1">
    <location>
        <position position="35"/>
    </location>
    <ligand>
        <name>substrate</name>
    </ligand>
</feature>
<feature type="binding site" evidence="1">
    <location>
        <begin position="62"/>
        <end position="71"/>
    </location>
    <ligand>
        <name>substrate</name>
    </ligand>
</feature>
<feature type="binding site" evidence="1">
    <location>
        <position position="121"/>
    </location>
    <ligand>
        <name>substrate</name>
    </ligand>
</feature>
<feature type="binding site" evidence="1">
    <location>
        <position position="182"/>
    </location>
    <ligand>
        <name>substrate</name>
    </ligand>
</feature>
<feature type="binding site" evidence="1">
    <location>
        <position position="191"/>
    </location>
    <ligand>
        <name>substrate</name>
    </ligand>
</feature>
<feature type="binding site" evidence="1">
    <location>
        <position position="211"/>
    </location>
    <ligand>
        <name>substrate</name>
    </ligand>
</feature>
<feature type="binding site" evidence="1">
    <location>
        <position position="212"/>
    </location>
    <ligand>
        <name>substrate</name>
    </ligand>
</feature>
<name>PYRF_ACIBC</name>
<proteinExistence type="inferred from homology"/>
<sequence length="232" mass="25366">MEESLLSIIVALDAKSQYDALKIVEQLDPTLCRVKVGKELFTHEGPSVVKKLQEENFEVFLDLKFHDIPNTTAQAVCAAADLGVWMVNVHASGGRKMMETCVERLKAGNYQTQLIAVTVLTSMGREDLKDIGLDIEPVEQVKRLAKLTKESGLDGVVCSAQEAKILRELIGQDFSLVTPGIRPEGSNADDQKRIVTPKQAMLDGSTHLVIGRPITKAENPTEMLKSILASIA</sequence>
<accession>B2HZE8</accession>
<keyword id="KW-0210">Decarboxylase</keyword>
<keyword id="KW-0456">Lyase</keyword>
<keyword id="KW-0665">Pyrimidine biosynthesis</keyword>
<comment type="function">
    <text evidence="1">Catalyzes the decarboxylation of orotidine 5'-monophosphate (OMP) to uridine 5'-monophosphate (UMP).</text>
</comment>
<comment type="catalytic activity">
    <reaction evidence="1">
        <text>orotidine 5'-phosphate + H(+) = UMP + CO2</text>
        <dbReference type="Rhea" id="RHEA:11596"/>
        <dbReference type="ChEBI" id="CHEBI:15378"/>
        <dbReference type="ChEBI" id="CHEBI:16526"/>
        <dbReference type="ChEBI" id="CHEBI:57538"/>
        <dbReference type="ChEBI" id="CHEBI:57865"/>
        <dbReference type="EC" id="4.1.1.23"/>
    </reaction>
</comment>
<comment type="pathway">
    <text evidence="1">Pyrimidine metabolism; UMP biosynthesis via de novo pathway; UMP from orotate: step 2/2.</text>
</comment>
<comment type="subunit">
    <text evidence="1">Homodimer.</text>
</comment>
<comment type="similarity">
    <text evidence="1">Belongs to the OMP decarboxylase family. Type 1 subfamily.</text>
</comment>
<evidence type="ECO:0000255" key="1">
    <source>
        <dbReference type="HAMAP-Rule" id="MF_01200"/>
    </source>
</evidence>
<protein>
    <recommendedName>
        <fullName evidence="1">Orotidine 5'-phosphate decarboxylase</fullName>
        <ecNumber evidence="1">4.1.1.23</ecNumber>
    </recommendedName>
    <alternativeName>
        <fullName evidence="1">OMP decarboxylase</fullName>
        <shortName evidence="1">OMPDCase</shortName>
        <shortName evidence="1">OMPdecase</shortName>
    </alternativeName>
</protein>
<gene>
    <name evidence="1" type="primary">pyrF</name>
    <name type="ordered locus">ACICU_01622</name>
</gene>
<reference key="1">
    <citation type="journal article" date="2008" name="Antimicrob. Agents Chemother.">
        <title>Whole-genome pyrosequencing of an epidemic multidrug-resistant Acinetobacter baumannii strain belonging to the European clone II group.</title>
        <authorList>
            <person name="Iacono M."/>
            <person name="Villa L."/>
            <person name="Fortini D."/>
            <person name="Bordoni R."/>
            <person name="Imperi F."/>
            <person name="Bonnal R.J."/>
            <person name="Sicheritz-Ponten T."/>
            <person name="De Bellis G."/>
            <person name="Visca P."/>
            <person name="Cassone A."/>
            <person name="Carattoli A."/>
        </authorList>
    </citation>
    <scope>NUCLEOTIDE SEQUENCE [LARGE SCALE GENOMIC DNA]</scope>
    <source>
        <strain>ACICU</strain>
    </source>
</reference>
<organism>
    <name type="scientific">Acinetobacter baumannii (strain ACICU)</name>
    <dbReference type="NCBI Taxonomy" id="405416"/>
    <lineage>
        <taxon>Bacteria</taxon>
        <taxon>Pseudomonadati</taxon>
        <taxon>Pseudomonadota</taxon>
        <taxon>Gammaproteobacteria</taxon>
        <taxon>Moraxellales</taxon>
        <taxon>Moraxellaceae</taxon>
        <taxon>Acinetobacter</taxon>
        <taxon>Acinetobacter calcoaceticus/baumannii complex</taxon>
    </lineage>
</organism>
<dbReference type="EC" id="4.1.1.23" evidence="1"/>
<dbReference type="EMBL" id="CP000863">
    <property type="protein sequence ID" value="ACC56934.1"/>
    <property type="molecule type" value="Genomic_DNA"/>
</dbReference>
<dbReference type="RefSeq" id="WP_000392928.1">
    <property type="nucleotide sequence ID" value="NZ_CP031380.1"/>
</dbReference>
<dbReference type="SMR" id="B2HZE8"/>
<dbReference type="KEGG" id="abc:ACICU_01622"/>
<dbReference type="HOGENOM" id="CLU_067069_0_0_6"/>
<dbReference type="UniPathway" id="UPA00070">
    <property type="reaction ID" value="UER00120"/>
</dbReference>
<dbReference type="Proteomes" id="UP000008839">
    <property type="component" value="Chromosome"/>
</dbReference>
<dbReference type="GO" id="GO:0005829">
    <property type="term" value="C:cytosol"/>
    <property type="evidence" value="ECO:0007669"/>
    <property type="project" value="TreeGrafter"/>
</dbReference>
<dbReference type="GO" id="GO:0004590">
    <property type="term" value="F:orotidine-5'-phosphate decarboxylase activity"/>
    <property type="evidence" value="ECO:0007669"/>
    <property type="project" value="UniProtKB-UniRule"/>
</dbReference>
<dbReference type="GO" id="GO:0006207">
    <property type="term" value="P:'de novo' pyrimidine nucleobase biosynthetic process"/>
    <property type="evidence" value="ECO:0007669"/>
    <property type="project" value="InterPro"/>
</dbReference>
<dbReference type="GO" id="GO:0044205">
    <property type="term" value="P:'de novo' UMP biosynthetic process"/>
    <property type="evidence" value="ECO:0007669"/>
    <property type="project" value="UniProtKB-UniRule"/>
</dbReference>
<dbReference type="CDD" id="cd04725">
    <property type="entry name" value="OMP_decarboxylase_like"/>
    <property type="match status" value="1"/>
</dbReference>
<dbReference type="FunFam" id="3.20.20.70:FF:000015">
    <property type="entry name" value="Orotidine 5'-phosphate decarboxylase"/>
    <property type="match status" value="1"/>
</dbReference>
<dbReference type="Gene3D" id="3.20.20.70">
    <property type="entry name" value="Aldolase class I"/>
    <property type="match status" value="1"/>
</dbReference>
<dbReference type="HAMAP" id="MF_01200_B">
    <property type="entry name" value="OMPdecase_type1_B"/>
    <property type="match status" value="1"/>
</dbReference>
<dbReference type="InterPro" id="IPR013785">
    <property type="entry name" value="Aldolase_TIM"/>
</dbReference>
<dbReference type="InterPro" id="IPR014732">
    <property type="entry name" value="OMPdecase"/>
</dbReference>
<dbReference type="InterPro" id="IPR018089">
    <property type="entry name" value="OMPdecase_AS"/>
</dbReference>
<dbReference type="InterPro" id="IPR047596">
    <property type="entry name" value="OMPdecase_bac"/>
</dbReference>
<dbReference type="InterPro" id="IPR001754">
    <property type="entry name" value="OMPdeCOase_dom"/>
</dbReference>
<dbReference type="InterPro" id="IPR011060">
    <property type="entry name" value="RibuloseP-bd_barrel"/>
</dbReference>
<dbReference type="NCBIfam" id="NF001273">
    <property type="entry name" value="PRK00230.1"/>
    <property type="match status" value="1"/>
</dbReference>
<dbReference type="NCBIfam" id="TIGR01740">
    <property type="entry name" value="pyrF"/>
    <property type="match status" value="1"/>
</dbReference>
<dbReference type="PANTHER" id="PTHR32119">
    <property type="entry name" value="OROTIDINE 5'-PHOSPHATE DECARBOXYLASE"/>
    <property type="match status" value="1"/>
</dbReference>
<dbReference type="PANTHER" id="PTHR32119:SF2">
    <property type="entry name" value="OROTIDINE 5'-PHOSPHATE DECARBOXYLASE"/>
    <property type="match status" value="1"/>
</dbReference>
<dbReference type="Pfam" id="PF00215">
    <property type="entry name" value="OMPdecase"/>
    <property type="match status" value="1"/>
</dbReference>
<dbReference type="SMART" id="SM00934">
    <property type="entry name" value="OMPdecase"/>
    <property type="match status" value="1"/>
</dbReference>
<dbReference type="SUPFAM" id="SSF51366">
    <property type="entry name" value="Ribulose-phoshate binding barrel"/>
    <property type="match status" value="1"/>
</dbReference>
<dbReference type="PROSITE" id="PS00156">
    <property type="entry name" value="OMPDECASE"/>
    <property type="match status" value="1"/>
</dbReference>